<accession>Q6D4X4</accession>
<dbReference type="EC" id="3.5.4.4" evidence="1"/>
<dbReference type="EMBL" id="BX950851">
    <property type="protein sequence ID" value="CAG75169.1"/>
    <property type="molecule type" value="Genomic_DNA"/>
</dbReference>
<dbReference type="RefSeq" id="WP_011093824.1">
    <property type="nucleotide sequence ID" value="NC_004547.2"/>
</dbReference>
<dbReference type="SMR" id="Q6D4X4"/>
<dbReference type="STRING" id="218491.ECA2266"/>
<dbReference type="KEGG" id="eca:ECA2266"/>
<dbReference type="PATRIC" id="fig|218491.5.peg.2296"/>
<dbReference type="eggNOG" id="COG1816">
    <property type="taxonomic scope" value="Bacteria"/>
</dbReference>
<dbReference type="HOGENOM" id="CLU_039228_0_2_6"/>
<dbReference type="OrthoDB" id="105475at2"/>
<dbReference type="Proteomes" id="UP000007966">
    <property type="component" value="Chromosome"/>
</dbReference>
<dbReference type="GO" id="GO:0005829">
    <property type="term" value="C:cytosol"/>
    <property type="evidence" value="ECO:0007669"/>
    <property type="project" value="TreeGrafter"/>
</dbReference>
<dbReference type="GO" id="GO:0046936">
    <property type="term" value="F:2'-deoxyadenosine deaminase activity"/>
    <property type="evidence" value="ECO:0007669"/>
    <property type="project" value="RHEA"/>
</dbReference>
<dbReference type="GO" id="GO:0004000">
    <property type="term" value="F:adenosine deaminase activity"/>
    <property type="evidence" value="ECO:0007669"/>
    <property type="project" value="UniProtKB-UniRule"/>
</dbReference>
<dbReference type="GO" id="GO:0008270">
    <property type="term" value="F:zinc ion binding"/>
    <property type="evidence" value="ECO:0007669"/>
    <property type="project" value="UniProtKB-UniRule"/>
</dbReference>
<dbReference type="GO" id="GO:0006154">
    <property type="term" value="P:adenosine catabolic process"/>
    <property type="evidence" value="ECO:0007669"/>
    <property type="project" value="TreeGrafter"/>
</dbReference>
<dbReference type="GO" id="GO:0043103">
    <property type="term" value="P:hypoxanthine salvage"/>
    <property type="evidence" value="ECO:0007669"/>
    <property type="project" value="TreeGrafter"/>
</dbReference>
<dbReference type="GO" id="GO:0046103">
    <property type="term" value="P:inosine biosynthetic process"/>
    <property type="evidence" value="ECO:0007669"/>
    <property type="project" value="TreeGrafter"/>
</dbReference>
<dbReference type="GO" id="GO:0009117">
    <property type="term" value="P:nucleotide metabolic process"/>
    <property type="evidence" value="ECO:0007669"/>
    <property type="project" value="UniProtKB-KW"/>
</dbReference>
<dbReference type="GO" id="GO:0009168">
    <property type="term" value="P:purine ribonucleoside monophosphate biosynthetic process"/>
    <property type="evidence" value="ECO:0007669"/>
    <property type="project" value="UniProtKB-UniRule"/>
</dbReference>
<dbReference type="FunFam" id="3.20.20.140:FF:000009">
    <property type="entry name" value="Adenosine deaminase"/>
    <property type="match status" value="1"/>
</dbReference>
<dbReference type="Gene3D" id="3.20.20.140">
    <property type="entry name" value="Metal-dependent hydrolases"/>
    <property type="match status" value="1"/>
</dbReference>
<dbReference type="HAMAP" id="MF_00540">
    <property type="entry name" value="A_deaminase"/>
    <property type="match status" value="1"/>
</dbReference>
<dbReference type="InterPro" id="IPR028893">
    <property type="entry name" value="A_deaminase"/>
</dbReference>
<dbReference type="InterPro" id="IPR001365">
    <property type="entry name" value="A_deaminase_dom"/>
</dbReference>
<dbReference type="InterPro" id="IPR006330">
    <property type="entry name" value="Ado/ade_deaminase"/>
</dbReference>
<dbReference type="InterPro" id="IPR032466">
    <property type="entry name" value="Metal_Hydrolase"/>
</dbReference>
<dbReference type="NCBIfam" id="TIGR01430">
    <property type="entry name" value="aden_deam"/>
    <property type="match status" value="1"/>
</dbReference>
<dbReference type="NCBIfam" id="NF006846">
    <property type="entry name" value="PRK09358.1-1"/>
    <property type="match status" value="1"/>
</dbReference>
<dbReference type="PANTHER" id="PTHR11409">
    <property type="entry name" value="ADENOSINE DEAMINASE"/>
    <property type="match status" value="1"/>
</dbReference>
<dbReference type="PANTHER" id="PTHR11409:SF43">
    <property type="entry name" value="ADENOSINE DEAMINASE"/>
    <property type="match status" value="1"/>
</dbReference>
<dbReference type="Pfam" id="PF00962">
    <property type="entry name" value="A_deaminase"/>
    <property type="match status" value="1"/>
</dbReference>
<dbReference type="SUPFAM" id="SSF51556">
    <property type="entry name" value="Metallo-dependent hydrolases"/>
    <property type="match status" value="1"/>
</dbReference>
<name>ADD_PECAS</name>
<comment type="function">
    <text evidence="1">Catalyzes the hydrolytic deamination of adenosine and 2-deoxyadenosine.</text>
</comment>
<comment type="catalytic activity">
    <reaction evidence="1">
        <text>adenosine + H2O + H(+) = inosine + NH4(+)</text>
        <dbReference type="Rhea" id="RHEA:24408"/>
        <dbReference type="ChEBI" id="CHEBI:15377"/>
        <dbReference type="ChEBI" id="CHEBI:15378"/>
        <dbReference type="ChEBI" id="CHEBI:16335"/>
        <dbReference type="ChEBI" id="CHEBI:17596"/>
        <dbReference type="ChEBI" id="CHEBI:28938"/>
        <dbReference type="EC" id="3.5.4.4"/>
    </reaction>
    <physiologicalReaction direction="left-to-right" evidence="1">
        <dbReference type="Rhea" id="RHEA:24409"/>
    </physiologicalReaction>
</comment>
<comment type="catalytic activity">
    <reaction evidence="1">
        <text>2'-deoxyadenosine + H2O + H(+) = 2'-deoxyinosine + NH4(+)</text>
        <dbReference type="Rhea" id="RHEA:28190"/>
        <dbReference type="ChEBI" id="CHEBI:15377"/>
        <dbReference type="ChEBI" id="CHEBI:15378"/>
        <dbReference type="ChEBI" id="CHEBI:17256"/>
        <dbReference type="ChEBI" id="CHEBI:28938"/>
        <dbReference type="ChEBI" id="CHEBI:28997"/>
        <dbReference type="EC" id="3.5.4.4"/>
    </reaction>
    <physiologicalReaction direction="left-to-right" evidence="1">
        <dbReference type="Rhea" id="RHEA:28191"/>
    </physiologicalReaction>
</comment>
<comment type="cofactor">
    <cofactor evidence="1">
        <name>Zn(2+)</name>
        <dbReference type="ChEBI" id="CHEBI:29105"/>
    </cofactor>
    <text evidence="1">Binds 1 zinc ion per subunit.</text>
</comment>
<comment type="similarity">
    <text evidence="1">Belongs to the metallo-dependent hydrolases superfamily. Adenosine and AMP deaminases family. Adenosine deaminase subfamily.</text>
</comment>
<keyword id="KW-0378">Hydrolase</keyword>
<keyword id="KW-0479">Metal-binding</keyword>
<keyword id="KW-0546">Nucleotide metabolism</keyword>
<keyword id="KW-1185">Reference proteome</keyword>
<keyword id="KW-0862">Zinc</keyword>
<feature type="chain" id="PRO_1000017662" description="Adenosine deaminase">
    <location>
        <begin position="1"/>
        <end position="337"/>
    </location>
</feature>
<feature type="active site" description="Proton donor" evidence="1">
    <location>
        <position position="200"/>
    </location>
</feature>
<feature type="binding site" evidence="1">
    <location>
        <position position="12"/>
    </location>
    <ligand>
        <name>Zn(2+)</name>
        <dbReference type="ChEBI" id="CHEBI:29105"/>
        <note>catalytic</note>
    </ligand>
</feature>
<feature type="binding site" evidence="1">
    <location>
        <position position="14"/>
    </location>
    <ligand>
        <name>substrate</name>
    </ligand>
</feature>
<feature type="binding site" evidence="1">
    <location>
        <position position="14"/>
    </location>
    <ligand>
        <name>Zn(2+)</name>
        <dbReference type="ChEBI" id="CHEBI:29105"/>
        <note>catalytic</note>
    </ligand>
</feature>
<feature type="binding site" evidence="1">
    <location>
        <position position="16"/>
    </location>
    <ligand>
        <name>substrate</name>
    </ligand>
</feature>
<feature type="binding site" evidence="1">
    <location>
        <position position="170"/>
    </location>
    <ligand>
        <name>substrate</name>
    </ligand>
</feature>
<feature type="binding site" evidence="1">
    <location>
        <position position="197"/>
    </location>
    <ligand>
        <name>Zn(2+)</name>
        <dbReference type="ChEBI" id="CHEBI:29105"/>
        <note>catalytic</note>
    </ligand>
</feature>
<feature type="binding site" evidence="1">
    <location>
        <position position="278"/>
    </location>
    <ligand>
        <name>Zn(2+)</name>
        <dbReference type="ChEBI" id="CHEBI:29105"/>
        <note>catalytic</note>
    </ligand>
</feature>
<feature type="binding site" evidence="1">
    <location>
        <position position="279"/>
    </location>
    <ligand>
        <name>substrate</name>
    </ligand>
</feature>
<feature type="site" description="Important for catalytic activity" evidence="1">
    <location>
        <position position="221"/>
    </location>
</feature>
<proteinExistence type="inferred from homology"/>
<reference key="1">
    <citation type="journal article" date="2004" name="Proc. Natl. Acad. Sci. U.S.A.">
        <title>Genome sequence of the enterobacterial phytopathogen Erwinia carotovora subsp. atroseptica and characterization of virulence factors.</title>
        <authorList>
            <person name="Bell K.S."/>
            <person name="Sebaihia M."/>
            <person name="Pritchard L."/>
            <person name="Holden M.T.G."/>
            <person name="Hyman L.J."/>
            <person name="Holeva M.C."/>
            <person name="Thomson N.R."/>
            <person name="Bentley S.D."/>
            <person name="Churcher L.J.C."/>
            <person name="Mungall K."/>
            <person name="Atkin R."/>
            <person name="Bason N."/>
            <person name="Brooks K."/>
            <person name="Chillingworth T."/>
            <person name="Clark K."/>
            <person name="Doggett J."/>
            <person name="Fraser A."/>
            <person name="Hance Z."/>
            <person name="Hauser H."/>
            <person name="Jagels K."/>
            <person name="Moule S."/>
            <person name="Norbertczak H."/>
            <person name="Ormond D."/>
            <person name="Price C."/>
            <person name="Quail M.A."/>
            <person name="Sanders M."/>
            <person name="Walker D."/>
            <person name="Whitehead S."/>
            <person name="Salmond G.P.C."/>
            <person name="Birch P.R.J."/>
            <person name="Parkhill J."/>
            <person name="Toth I.K."/>
        </authorList>
    </citation>
    <scope>NUCLEOTIDE SEQUENCE [LARGE SCALE GENOMIC DNA]</scope>
    <source>
        <strain>SCRI 1043 / ATCC BAA-672</strain>
    </source>
</reference>
<evidence type="ECO:0000255" key="1">
    <source>
        <dbReference type="HAMAP-Rule" id="MF_00540"/>
    </source>
</evidence>
<sequence>MIDLRLPLTDIHRHLDGNIRAQSILELGRQYNIALPASDLDALRPHVQVTKNEPDLLSFLQKLDWGVAVLGSLDACRRVAYENVEDAMNAGLDYAELRFSPYYMAMNHKLPIAGVVEAVIDGITAGSRDFDTDIRLIGIMSRTFGTEACQQELDALLSQRDRIVALDLAGDELGYPGAQFTSHFQQARDAGWHITVHAGEAAGPESIWQAINHLGAERIGHGVTAIIDPRLMTHMAETGIGIESCLTSNIQTSTVETLDKHPLIHFLRYGIPATINTDDPAVQGIEIRHEYEVAAPLAGLTAVETRKAQENGLNIAFISEQEKQQLREKVLRKRASA</sequence>
<protein>
    <recommendedName>
        <fullName evidence="1">Adenosine deaminase</fullName>
        <ecNumber evidence="1">3.5.4.4</ecNumber>
    </recommendedName>
    <alternativeName>
        <fullName evidence="1">Adenosine aminohydrolase</fullName>
    </alternativeName>
</protein>
<gene>
    <name evidence="1" type="primary">add</name>
    <name type="ordered locus">ECA2266</name>
</gene>
<organism>
    <name type="scientific">Pectobacterium atrosepticum (strain SCRI 1043 / ATCC BAA-672)</name>
    <name type="common">Erwinia carotovora subsp. atroseptica</name>
    <dbReference type="NCBI Taxonomy" id="218491"/>
    <lineage>
        <taxon>Bacteria</taxon>
        <taxon>Pseudomonadati</taxon>
        <taxon>Pseudomonadota</taxon>
        <taxon>Gammaproteobacteria</taxon>
        <taxon>Enterobacterales</taxon>
        <taxon>Pectobacteriaceae</taxon>
        <taxon>Pectobacterium</taxon>
    </lineage>
</organism>